<evidence type="ECO:0000250" key="1"/>
<evidence type="ECO:0000255" key="2"/>
<evidence type="ECO:0000305" key="3"/>
<proteinExistence type="inferred from homology"/>
<accession>C4Y7Q2</accession>
<protein>
    <recommendedName>
        <fullName>Altered inheritance of mitochondria protein 24, mitochondrial</fullName>
    </recommendedName>
</protein>
<organism>
    <name type="scientific">Clavispora lusitaniae (strain ATCC 42720)</name>
    <name type="common">Yeast</name>
    <name type="synonym">Candida lusitaniae</name>
    <dbReference type="NCBI Taxonomy" id="306902"/>
    <lineage>
        <taxon>Eukaryota</taxon>
        <taxon>Fungi</taxon>
        <taxon>Dikarya</taxon>
        <taxon>Ascomycota</taxon>
        <taxon>Saccharomycotina</taxon>
        <taxon>Pichiomycetes</taxon>
        <taxon>Metschnikowiaceae</taxon>
        <taxon>Clavispora</taxon>
    </lineage>
</organism>
<comment type="subcellular location">
    <subcellularLocation>
        <location evidence="1">Mitochondrion</location>
    </subcellularLocation>
</comment>
<comment type="similarity">
    <text evidence="3">Belongs to the AIM24 family.</text>
</comment>
<gene>
    <name type="primary">AIM24</name>
    <name type="ORF">CLUG_04230</name>
</gene>
<feature type="transit peptide" description="Mitochondrion" evidence="2">
    <location>
        <begin position="1"/>
        <end position="50"/>
    </location>
</feature>
<feature type="chain" id="PRO_0000399575" description="Altered inheritance of mitochondria protein 24, mitochondrial">
    <location>
        <begin position="51"/>
        <end position="378"/>
    </location>
</feature>
<keyword id="KW-0496">Mitochondrion</keyword>
<keyword id="KW-1185">Reference proteome</keyword>
<keyword id="KW-0809">Transit peptide</keyword>
<name>AIM24_CLAL4</name>
<dbReference type="EMBL" id="CH408080">
    <property type="protein sequence ID" value="EEQ40102.1"/>
    <property type="molecule type" value="Genomic_DNA"/>
</dbReference>
<dbReference type="RefSeq" id="XP_002615348.1">
    <property type="nucleotide sequence ID" value="XM_002615302.1"/>
</dbReference>
<dbReference type="FunCoup" id="C4Y7Q2">
    <property type="interactions" value="13"/>
</dbReference>
<dbReference type="GeneID" id="8496025"/>
<dbReference type="KEGG" id="clu:CLUG_04230"/>
<dbReference type="VEuPathDB" id="FungiDB:CLUG_04230"/>
<dbReference type="HOGENOM" id="CLU_040665_0_0_1"/>
<dbReference type="InParanoid" id="C4Y7Q2"/>
<dbReference type="OMA" id="NGPYDLQ"/>
<dbReference type="OrthoDB" id="2179at4891"/>
<dbReference type="Proteomes" id="UP000007703">
    <property type="component" value="Unassembled WGS sequence"/>
</dbReference>
<dbReference type="GO" id="GO:0005743">
    <property type="term" value="C:mitochondrial inner membrane"/>
    <property type="evidence" value="ECO:0007669"/>
    <property type="project" value="TreeGrafter"/>
</dbReference>
<dbReference type="GO" id="GO:0007007">
    <property type="term" value="P:inner mitochondrial membrane organization"/>
    <property type="evidence" value="ECO:0007669"/>
    <property type="project" value="TreeGrafter"/>
</dbReference>
<dbReference type="Gene3D" id="3.60.160.10">
    <property type="entry name" value="Mitochondrial biogenesis AIM24"/>
    <property type="match status" value="1"/>
</dbReference>
<dbReference type="InterPro" id="IPR002838">
    <property type="entry name" value="AIM24"/>
</dbReference>
<dbReference type="InterPro" id="IPR036983">
    <property type="entry name" value="AIM24_sf"/>
</dbReference>
<dbReference type="PANTHER" id="PTHR36959">
    <property type="entry name" value="ALTERED INHERITANCE OF MITOCHONDRIA PROTEIN 24, MITOCHONDRIAL"/>
    <property type="match status" value="1"/>
</dbReference>
<dbReference type="PANTHER" id="PTHR36959:SF2">
    <property type="entry name" value="ALTERED INHERITANCE OF MITOCHONDRIA PROTEIN 24, MITOCHONDRIAL"/>
    <property type="match status" value="1"/>
</dbReference>
<dbReference type="Pfam" id="PF01987">
    <property type="entry name" value="AIM24"/>
    <property type="match status" value="1"/>
</dbReference>
<reference key="1">
    <citation type="journal article" date="2009" name="Nature">
        <title>Evolution of pathogenicity and sexual reproduction in eight Candida genomes.</title>
        <authorList>
            <person name="Butler G."/>
            <person name="Rasmussen M.D."/>
            <person name="Lin M.F."/>
            <person name="Santos M.A.S."/>
            <person name="Sakthikumar S."/>
            <person name="Munro C.A."/>
            <person name="Rheinbay E."/>
            <person name="Grabherr M."/>
            <person name="Forche A."/>
            <person name="Reedy J.L."/>
            <person name="Agrafioti I."/>
            <person name="Arnaud M.B."/>
            <person name="Bates S."/>
            <person name="Brown A.J.P."/>
            <person name="Brunke S."/>
            <person name="Costanzo M.C."/>
            <person name="Fitzpatrick D.A."/>
            <person name="de Groot P.W.J."/>
            <person name="Harris D."/>
            <person name="Hoyer L.L."/>
            <person name="Hube B."/>
            <person name="Klis F.M."/>
            <person name="Kodira C."/>
            <person name="Lennard N."/>
            <person name="Logue M.E."/>
            <person name="Martin R."/>
            <person name="Neiman A.M."/>
            <person name="Nikolaou E."/>
            <person name="Quail M.A."/>
            <person name="Quinn J."/>
            <person name="Santos M.C."/>
            <person name="Schmitzberger F.F."/>
            <person name="Sherlock G."/>
            <person name="Shah P."/>
            <person name="Silverstein K.A.T."/>
            <person name="Skrzypek M.S."/>
            <person name="Soll D."/>
            <person name="Staggs R."/>
            <person name="Stansfield I."/>
            <person name="Stumpf M.P.H."/>
            <person name="Sudbery P.E."/>
            <person name="Srikantha T."/>
            <person name="Zeng Q."/>
            <person name="Berman J."/>
            <person name="Berriman M."/>
            <person name="Heitman J."/>
            <person name="Gow N.A.R."/>
            <person name="Lorenz M.C."/>
            <person name="Birren B.W."/>
            <person name="Kellis M."/>
            <person name="Cuomo C.A."/>
        </authorList>
    </citation>
    <scope>NUCLEOTIDE SEQUENCE [LARGE SCALE GENOMIC DNA]</scope>
    <source>
        <strain>ATCC 42720</strain>
    </source>
</reference>
<sequence>MKHLTRAVRPLHVQAAPVAASAHPGALSRVPSAAAVDLPAPTPGDQVRLQALGSPPSVASVAVPPSLPVFVRRGSVLAVSGRIDRIVSAFVAPMWLRRLTLGNIVSRYQRLVATEPFAVLASASAPSLWPQLVRRATPRSFASLTLDGTADWAVLKRDALQVYAGPALTLSVHAAPQRISRRLAQSLNTSRIPTGLRRTGYTFVSGRGVVALAGHGSVYAARVAADEQLTVARSSIVAISVNGPHDLHNCVAQMPQTQASAAGSAGSATSAAGSNSRKWTDLKWKDVVPWVRGVWSKLVSAPRWGSGFVRVSGPRTVLLQSGGAQQMWEHTVRGPRSASAPKVSADYLNVVTFDQAHRPEIRSTSDFGEAVRAIEKTK</sequence>